<keyword id="KW-0963">Cytoplasm</keyword>
<keyword id="KW-0342">GTP-binding</keyword>
<keyword id="KW-0436">Ligase</keyword>
<keyword id="KW-0460">Magnesium</keyword>
<keyword id="KW-0479">Metal-binding</keyword>
<keyword id="KW-0547">Nucleotide-binding</keyword>
<keyword id="KW-0658">Purine biosynthesis</keyword>
<proteinExistence type="inferred from homology"/>
<comment type="function">
    <text evidence="1">Plays an important role in the de novo pathway of purine nucleotide biosynthesis. Catalyzes the first committed step in the biosynthesis of AMP from IMP.</text>
</comment>
<comment type="catalytic activity">
    <reaction evidence="1">
        <text>IMP + L-aspartate + GTP = N(6)-(1,2-dicarboxyethyl)-AMP + GDP + phosphate + 2 H(+)</text>
        <dbReference type="Rhea" id="RHEA:15753"/>
        <dbReference type="ChEBI" id="CHEBI:15378"/>
        <dbReference type="ChEBI" id="CHEBI:29991"/>
        <dbReference type="ChEBI" id="CHEBI:37565"/>
        <dbReference type="ChEBI" id="CHEBI:43474"/>
        <dbReference type="ChEBI" id="CHEBI:57567"/>
        <dbReference type="ChEBI" id="CHEBI:58053"/>
        <dbReference type="ChEBI" id="CHEBI:58189"/>
        <dbReference type="EC" id="6.3.4.4"/>
    </reaction>
</comment>
<comment type="cofactor">
    <cofactor evidence="1">
        <name>Mg(2+)</name>
        <dbReference type="ChEBI" id="CHEBI:18420"/>
    </cofactor>
    <text evidence="1">Binds 1 Mg(2+) ion per subunit.</text>
</comment>
<comment type="pathway">
    <text evidence="1">Purine metabolism; AMP biosynthesis via de novo pathway; AMP from IMP: step 1/2.</text>
</comment>
<comment type="subunit">
    <text evidence="1">Homodimer.</text>
</comment>
<comment type="subcellular location">
    <subcellularLocation>
        <location evidence="1">Cytoplasm</location>
    </subcellularLocation>
</comment>
<comment type="similarity">
    <text evidence="1">Belongs to the adenylosuccinate synthetase family.</text>
</comment>
<sequence length="430" mass="47350">MTSVVVVGTQWGDEGKGKITDFLSADAEVIARYQGGDNAGHTIVIDGKKFKLHLIPSGIFFPQKISVIGNGVVVNPKSLVKELAYLHDEGVTTDNLRISDRAHVILPYHIQLDQLQEDAKGDNKIGTTIKGIGPAYMDKAARVGIRIADLLDKDIFAERLRINLAEKNRLFEKMYDSTPLGFDAIFEEYYAYGQEIKQYVTDTSVILNDALDAGKRVLFEGAQGVMLDIDQGTYPFVTSSNPVAGGVTIGSGVGPSKINKVVGVCKAYTSRVGDGPFPTELFDEVGERIREVGHEYGTTTGRPRRVGWFDSVVMRHSRRVSGITNLSLNSIDVLSGLDTVKICVAYDLDGKRIDYYPASLEQLKRCKPIYEELPGWQEDITGVRSLDELPENARNYVRRVGELVGVRISTFSVGPGREQTNILESVWASI</sequence>
<dbReference type="EC" id="6.3.4.4" evidence="1"/>
<dbReference type="EMBL" id="CP000259">
    <property type="protein sequence ID" value="ABF31326.1"/>
    <property type="molecule type" value="Genomic_DNA"/>
</dbReference>
<dbReference type="RefSeq" id="WP_002987876.1">
    <property type="nucleotide sequence ID" value="NC_008021.1"/>
</dbReference>
<dbReference type="SMR" id="Q1JNS3"/>
<dbReference type="KEGG" id="spk:MGAS9429_Spy0138"/>
<dbReference type="HOGENOM" id="CLU_029848_0_0_9"/>
<dbReference type="UniPathway" id="UPA00075">
    <property type="reaction ID" value="UER00335"/>
</dbReference>
<dbReference type="Proteomes" id="UP000002433">
    <property type="component" value="Chromosome"/>
</dbReference>
<dbReference type="GO" id="GO:0005737">
    <property type="term" value="C:cytoplasm"/>
    <property type="evidence" value="ECO:0007669"/>
    <property type="project" value="UniProtKB-SubCell"/>
</dbReference>
<dbReference type="GO" id="GO:0004019">
    <property type="term" value="F:adenylosuccinate synthase activity"/>
    <property type="evidence" value="ECO:0007669"/>
    <property type="project" value="UniProtKB-UniRule"/>
</dbReference>
<dbReference type="GO" id="GO:0005525">
    <property type="term" value="F:GTP binding"/>
    <property type="evidence" value="ECO:0007669"/>
    <property type="project" value="UniProtKB-UniRule"/>
</dbReference>
<dbReference type="GO" id="GO:0000287">
    <property type="term" value="F:magnesium ion binding"/>
    <property type="evidence" value="ECO:0007669"/>
    <property type="project" value="UniProtKB-UniRule"/>
</dbReference>
<dbReference type="GO" id="GO:0044208">
    <property type="term" value="P:'de novo' AMP biosynthetic process"/>
    <property type="evidence" value="ECO:0007669"/>
    <property type="project" value="UniProtKB-UniRule"/>
</dbReference>
<dbReference type="GO" id="GO:0046040">
    <property type="term" value="P:IMP metabolic process"/>
    <property type="evidence" value="ECO:0007669"/>
    <property type="project" value="TreeGrafter"/>
</dbReference>
<dbReference type="CDD" id="cd03108">
    <property type="entry name" value="AdSS"/>
    <property type="match status" value="1"/>
</dbReference>
<dbReference type="FunFam" id="1.10.300.10:FF:000001">
    <property type="entry name" value="Adenylosuccinate synthetase"/>
    <property type="match status" value="1"/>
</dbReference>
<dbReference type="FunFam" id="3.90.170.10:FF:000001">
    <property type="entry name" value="Adenylosuccinate synthetase"/>
    <property type="match status" value="1"/>
</dbReference>
<dbReference type="Gene3D" id="3.40.440.10">
    <property type="entry name" value="Adenylosuccinate Synthetase, subunit A, domain 1"/>
    <property type="match status" value="1"/>
</dbReference>
<dbReference type="Gene3D" id="1.10.300.10">
    <property type="entry name" value="Adenylosuccinate Synthetase, subunit A, domain 2"/>
    <property type="match status" value="1"/>
</dbReference>
<dbReference type="Gene3D" id="3.90.170.10">
    <property type="entry name" value="Adenylosuccinate Synthetase, subunit A, domain 3"/>
    <property type="match status" value="1"/>
</dbReference>
<dbReference type="HAMAP" id="MF_00011">
    <property type="entry name" value="Adenylosucc_synth"/>
    <property type="match status" value="1"/>
</dbReference>
<dbReference type="InterPro" id="IPR018220">
    <property type="entry name" value="Adenylosuccin_syn_GTP-bd"/>
</dbReference>
<dbReference type="InterPro" id="IPR033128">
    <property type="entry name" value="Adenylosuccin_syn_Lys_AS"/>
</dbReference>
<dbReference type="InterPro" id="IPR042109">
    <property type="entry name" value="Adenylosuccinate_synth_dom1"/>
</dbReference>
<dbReference type="InterPro" id="IPR042110">
    <property type="entry name" value="Adenylosuccinate_synth_dom2"/>
</dbReference>
<dbReference type="InterPro" id="IPR042111">
    <property type="entry name" value="Adenylosuccinate_synth_dom3"/>
</dbReference>
<dbReference type="InterPro" id="IPR001114">
    <property type="entry name" value="Adenylosuccinate_synthetase"/>
</dbReference>
<dbReference type="InterPro" id="IPR027417">
    <property type="entry name" value="P-loop_NTPase"/>
</dbReference>
<dbReference type="NCBIfam" id="NF002223">
    <property type="entry name" value="PRK01117.1"/>
    <property type="match status" value="1"/>
</dbReference>
<dbReference type="NCBIfam" id="TIGR00184">
    <property type="entry name" value="purA"/>
    <property type="match status" value="1"/>
</dbReference>
<dbReference type="PANTHER" id="PTHR11846">
    <property type="entry name" value="ADENYLOSUCCINATE SYNTHETASE"/>
    <property type="match status" value="1"/>
</dbReference>
<dbReference type="PANTHER" id="PTHR11846:SF0">
    <property type="entry name" value="ADENYLOSUCCINATE SYNTHETASE"/>
    <property type="match status" value="1"/>
</dbReference>
<dbReference type="Pfam" id="PF00709">
    <property type="entry name" value="Adenylsucc_synt"/>
    <property type="match status" value="1"/>
</dbReference>
<dbReference type="SMART" id="SM00788">
    <property type="entry name" value="Adenylsucc_synt"/>
    <property type="match status" value="1"/>
</dbReference>
<dbReference type="SUPFAM" id="SSF52540">
    <property type="entry name" value="P-loop containing nucleoside triphosphate hydrolases"/>
    <property type="match status" value="1"/>
</dbReference>
<dbReference type="PROSITE" id="PS01266">
    <property type="entry name" value="ADENYLOSUCCIN_SYN_1"/>
    <property type="match status" value="1"/>
</dbReference>
<dbReference type="PROSITE" id="PS00513">
    <property type="entry name" value="ADENYLOSUCCIN_SYN_2"/>
    <property type="match status" value="1"/>
</dbReference>
<organism>
    <name type="scientific">Streptococcus pyogenes serotype M12 (strain MGAS9429)</name>
    <dbReference type="NCBI Taxonomy" id="370551"/>
    <lineage>
        <taxon>Bacteria</taxon>
        <taxon>Bacillati</taxon>
        <taxon>Bacillota</taxon>
        <taxon>Bacilli</taxon>
        <taxon>Lactobacillales</taxon>
        <taxon>Streptococcaceae</taxon>
        <taxon>Streptococcus</taxon>
    </lineage>
</organism>
<accession>Q1JNS3</accession>
<name>PURA_STRPC</name>
<reference key="1">
    <citation type="journal article" date="2006" name="Proc. Natl. Acad. Sci. U.S.A.">
        <title>Molecular genetic anatomy of inter- and intraserotype variation in the human bacterial pathogen group A Streptococcus.</title>
        <authorList>
            <person name="Beres S.B."/>
            <person name="Richter E.W."/>
            <person name="Nagiec M.J."/>
            <person name="Sumby P."/>
            <person name="Porcella S.F."/>
            <person name="DeLeo F.R."/>
            <person name="Musser J.M."/>
        </authorList>
    </citation>
    <scope>NUCLEOTIDE SEQUENCE [LARGE SCALE GENOMIC DNA]</scope>
    <source>
        <strain>MGAS9429</strain>
    </source>
</reference>
<protein>
    <recommendedName>
        <fullName evidence="1">Adenylosuccinate synthetase</fullName>
        <shortName evidence="1">AMPSase</shortName>
        <shortName evidence="1">AdSS</shortName>
        <ecNumber evidence="1">6.3.4.4</ecNumber>
    </recommendedName>
    <alternativeName>
        <fullName evidence="1">IMP--aspartate ligase</fullName>
    </alternativeName>
</protein>
<evidence type="ECO:0000255" key="1">
    <source>
        <dbReference type="HAMAP-Rule" id="MF_00011"/>
    </source>
</evidence>
<feature type="chain" id="PRO_1000000927" description="Adenylosuccinate synthetase">
    <location>
        <begin position="1"/>
        <end position="430"/>
    </location>
</feature>
<feature type="active site" description="Proton acceptor" evidence="1">
    <location>
        <position position="13"/>
    </location>
</feature>
<feature type="active site" description="Proton donor" evidence="1">
    <location>
        <position position="41"/>
    </location>
</feature>
<feature type="binding site" evidence="1">
    <location>
        <begin position="12"/>
        <end position="18"/>
    </location>
    <ligand>
        <name>GTP</name>
        <dbReference type="ChEBI" id="CHEBI:37565"/>
    </ligand>
</feature>
<feature type="binding site" description="in other chain" evidence="1">
    <location>
        <begin position="13"/>
        <end position="16"/>
    </location>
    <ligand>
        <name>IMP</name>
        <dbReference type="ChEBI" id="CHEBI:58053"/>
        <note>ligand shared between dimeric partners</note>
    </ligand>
</feature>
<feature type="binding site" evidence="1">
    <location>
        <position position="13"/>
    </location>
    <ligand>
        <name>Mg(2+)</name>
        <dbReference type="ChEBI" id="CHEBI:18420"/>
    </ligand>
</feature>
<feature type="binding site" description="in other chain" evidence="1">
    <location>
        <begin position="38"/>
        <end position="41"/>
    </location>
    <ligand>
        <name>IMP</name>
        <dbReference type="ChEBI" id="CHEBI:58053"/>
        <note>ligand shared between dimeric partners</note>
    </ligand>
</feature>
<feature type="binding site" evidence="1">
    <location>
        <begin position="40"/>
        <end position="42"/>
    </location>
    <ligand>
        <name>GTP</name>
        <dbReference type="ChEBI" id="CHEBI:37565"/>
    </ligand>
</feature>
<feature type="binding site" evidence="1">
    <location>
        <position position="40"/>
    </location>
    <ligand>
        <name>Mg(2+)</name>
        <dbReference type="ChEBI" id="CHEBI:18420"/>
    </ligand>
</feature>
<feature type="binding site" description="in other chain" evidence="1">
    <location>
        <position position="128"/>
    </location>
    <ligand>
        <name>IMP</name>
        <dbReference type="ChEBI" id="CHEBI:58053"/>
        <note>ligand shared between dimeric partners</note>
    </ligand>
</feature>
<feature type="binding site" evidence="1">
    <location>
        <position position="142"/>
    </location>
    <ligand>
        <name>IMP</name>
        <dbReference type="ChEBI" id="CHEBI:58053"/>
        <note>ligand shared between dimeric partners</note>
    </ligand>
</feature>
<feature type="binding site" description="in other chain" evidence="1">
    <location>
        <position position="223"/>
    </location>
    <ligand>
        <name>IMP</name>
        <dbReference type="ChEBI" id="CHEBI:58053"/>
        <note>ligand shared between dimeric partners</note>
    </ligand>
</feature>
<feature type="binding site" description="in other chain" evidence="1">
    <location>
        <position position="238"/>
    </location>
    <ligand>
        <name>IMP</name>
        <dbReference type="ChEBI" id="CHEBI:58053"/>
        <note>ligand shared between dimeric partners</note>
    </ligand>
</feature>
<feature type="binding site" evidence="1">
    <location>
        <begin position="298"/>
        <end position="304"/>
    </location>
    <ligand>
        <name>substrate</name>
    </ligand>
</feature>
<feature type="binding site" description="in other chain" evidence="1">
    <location>
        <position position="302"/>
    </location>
    <ligand>
        <name>IMP</name>
        <dbReference type="ChEBI" id="CHEBI:58053"/>
        <note>ligand shared between dimeric partners</note>
    </ligand>
</feature>
<feature type="binding site" evidence="1">
    <location>
        <position position="304"/>
    </location>
    <ligand>
        <name>GTP</name>
        <dbReference type="ChEBI" id="CHEBI:37565"/>
    </ligand>
</feature>
<feature type="binding site" evidence="1">
    <location>
        <begin position="330"/>
        <end position="332"/>
    </location>
    <ligand>
        <name>GTP</name>
        <dbReference type="ChEBI" id="CHEBI:37565"/>
    </ligand>
</feature>
<feature type="binding site" evidence="1">
    <location>
        <begin position="412"/>
        <end position="414"/>
    </location>
    <ligand>
        <name>GTP</name>
        <dbReference type="ChEBI" id="CHEBI:37565"/>
    </ligand>
</feature>
<gene>
    <name evidence="1" type="primary">purA</name>
    <name type="ordered locus">MGAS9429_Spy0138</name>
</gene>